<feature type="chain" id="PRO_1000085547" description="Orotate phosphoribosyltransferase">
    <location>
        <begin position="1"/>
        <end position="213"/>
    </location>
</feature>
<feature type="binding site" description="in other chain" evidence="1">
    <location>
        <position position="26"/>
    </location>
    <ligand>
        <name>5-phospho-alpha-D-ribose 1-diphosphate</name>
        <dbReference type="ChEBI" id="CHEBI:58017"/>
        <note>ligand shared between dimeric partners</note>
    </ligand>
</feature>
<feature type="binding site" evidence="1">
    <location>
        <begin position="34"/>
        <end position="35"/>
    </location>
    <ligand>
        <name>orotate</name>
        <dbReference type="ChEBI" id="CHEBI:30839"/>
    </ligand>
</feature>
<feature type="binding site" description="in other chain" evidence="1">
    <location>
        <begin position="72"/>
        <end position="73"/>
    </location>
    <ligand>
        <name>5-phospho-alpha-D-ribose 1-diphosphate</name>
        <dbReference type="ChEBI" id="CHEBI:58017"/>
        <note>ligand shared between dimeric partners</note>
    </ligand>
</feature>
<feature type="binding site" evidence="1">
    <location>
        <position position="98"/>
    </location>
    <ligand>
        <name>5-phospho-alpha-D-ribose 1-diphosphate</name>
        <dbReference type="ChEBI" id="CHEBI:58017"/>
        <note>ligand shared between dimeric partners</note>
    </ligand>
</feature>
<feature type="binding site" description="in other chain" evidence="1">
    <location>
        <position position="99"/>
    </location>
    <ligand>
        <name>5-phospho-alpha-D-ribose 1-diphosphate</name>
        <dbReference type="ChEBI" id="CHEBI:58017"/>
        <note>ligand shared between dimeric partners</note>
    </ligand>
</feature>
<feature type="binding site" evidence="1">
    <location>
        <position position="102"/>
    </location>
    <ligand>
        <name>5-phospho-alpha-D-ribose 1-diphosphate</name>
        <dbReference type="ChEBI" id="CHEBI:58017"/>
        <note>ligand shared between dimeric partners</note>
    </ligand>
</feature>
<feature type="binding site" evidence="1">
    <location>
        <position position="104"/>
    </location>
    <ligand>
        <name>5-phospho-alpha-D-ribose 1-diphosphate</name>
        <dbReference type="ChEBI" id="CHEBI:58017"/>
        <note>ligand shared between dimeric partners</note>
    </ligand>
</feature>
<feature type="binding site" description="in other chain" evidence="1">
    <location>
        <begin position="123"/>
        <end position="131"/>
    </location>
    <ligand>
        <name>5-phospho-alpha-D-ribose 1-diphosphate</name>
        <dbReference type="ChEBI" id="CHEBI:58017"/>
        <note>ligand shared between dimeric partners</note>
    </ligand>
</feature>
<feature type="binding site" evidence="1">
    <location>
        <position position="127"/>
    </location>
    <ligand>
        <name>orotate</name>
        <dbReference type="ChEBI" id="CHEBI:30839"/>
    </ligand>
</feature>
<feature type="binding site" evidence="1">
    <location>
        <position position="155"/>
    </location>
    <ligand>
        <name>orotate</name>
        <dbReference type="ChEBI" id="CHEBI:30839"/>
    </ligand>
</feature>
<proteinExistence type="inferred from homology"/>
<keyword id="KW-0328">Glycosyltransferase</keyword>
<keyword id="KW-0460">Magnesium</keyword>
<keyword id="KW-0665">Pyrimidine biosynthesis</keyword>
<keyword id="KW-0808">Transferase</keyword>
<organism>
    <name type="scientific">Neisseria meningitidis serogroup C (strain 053442)</name>
    <dbReference type="NCBI Taxonomy" id="374833"/>
    <lineage>
        <taxon>Bacteria</taxon>
        <taxon>Pseudomonadati</taxon>
        <taxon>Pseudomonadota</taxon>
        <taxon>Betaproteobacteria</taxon>
        <taxon>Neisseriales</taxon>
        <taxon>Neisseriaceae</taxon>
        <taxon>Neisseria</taxon>
    </lineage>
</organism>
<comment type="function">
    <text evidence="1">Catalyzes the transfer of a ribosyl phosphate group from 5-phosphoribose 1-diphosphate to orotate, leading to the formation of orotidine monophosphate (OMP).</text>
</comment>
<comment type="catalytic activity">
    <reaction evidence="1">
        <text>orotidine 5'-phosphate + diphosphate = orotate + 5-phospho-alpha-D-ribose 1-diphosphate</text>
        <dbReference type="Rhea" id="RHEA:10380"/>
        <dbReference type="ChEBI" id="CHEBI:30839"/>
        <dbReference type="ChEBI" id="CHEBI:33019"/>
        <dbReference type="ChEBI" id="CHEBI:57538"/>
        <dbReference type="ChEBI" id="CHEBI:58017"/>
        <dbReference type="EC" id="2.4.2.10"/>
    </reaction>
</comment>
<comment type="cofactor">
    <cofactor evidence="1">
        <name>Mg(2+)</name>
        <dbReference type="ChEBI" id="CHEBI:18420"/>
    </cofactor>
</comment>
<comment type="pathway">
    <text evidence="1">Pyrimidine metabolism; UMP biosynthesis via de novo pathway; UMP from orotate: step 1/2.</text>
</comment>
<comment type="subunit">
    <text evidence="1">Homodimer.</text>
</comment>
<comment type="similarity">
    <text evidence="1">Belongs to the purine/pyrimidine phosphoribosyltransferase family. PyrE subfamily.</text>
</comment>
<name>PYRE_NEIM0</name>
<evidence type="ECO:0000255" key="1">
    <source>
        <dbReference type="HAMAP-Rule" id="MF_01208"/>
    </source>
</evidence>
<protein>
    <recommendedName>
        <fullName evidence="1">Orotate phosphoribosyltransferase</fullName>
        <shortName evidence="1">OPRT</shortName>
        <shortName evidence="1">OPRTase</shortName>
        <ecNumber evidence="1">2.4.2.10</ecNumber>
    </recommendedName>
</protein>
<reference key="1">
    <citation type="journal article" date="2008" name="Genomics">
        <title>Characterization of ST-4821 complex, a unique Neisseria meningitidis clone.</title>
        <authorList>
            <person name="Peng J."/>
            <person name="Yang L."/>
            <person name="Yang F."/>
            <person name="Yang J."/>
            <person name="Yan Y."/>
            <person name="Nie H."/>
            <person name="Zhang X."/>
            <person name="Xiong Z."/>
            <person name="Jiang Y."/>
            <person name="Cheng F."/>
            <person name="Xu X."/>
            <person name="Chen S."/>
            <person name="Sun L."/>
            <person name="Li W."/>
            <person name="Shen Y."/>
            <person name="Shao Z."/>
            <person name="Liang X."/>
            <person name="Xu J."/>
            <person name="Jin Q."/>
        </authorList>
    </citation>
    <scope>NUCLEOTIDE SEQUENCE [LARGE SCALE GENOMIC DNA]</scope>
    <source>
        <strain>053442</strain>
    </source>
</reference>
<dbReference type="EC" id="2.4.2.10" evidence="1"/>
<dbReference type="EMBL" id="CP000381">
    <property type="protein sequence ID" value="ABX72554.1"/>
    <property type="molecule type" value="Genomic_DNA"/>
</dbReference>
<dbReference type="RefSeq" id="WP_012221266.1">
    <property type="nucleotide sequence ID" value="NC_010120.1"/>
</dbReference>
<dbReference type="SMR" id="A9M1F6"/>
<dbReference type="KEGG" id="nmn:NMCC_0347"/>
<dbReference type="HOGENOM" id="CLU_074878_0_1_4"/>
<dbReference type="UniPathway" id="UPA00070">
    <property type="reaction ID" value="UER00119"/>
</dbReference>
<dbReference type="Proteomes" id="UP000001177">
    <property type="component" value="Chromosome"/>
</dbReference>
<dbReference type="GO" id="GO:0005737">
    <property type="term" value="C:cytoplasm"/>
    <property type="evidence" value="ECO:0007669"/>
    <property type="project" value="TreeGrafter"/>
</dbReference>
<dbReference type="GO" id="GO:0000287">
    <property type="term" value="F:magnesium ion binding"/>
    <property type="evidence" value="ECO:0007669"/>
    <property type="project" value="UniProtKB-UniRule"/>
</dbReference>
<dbReference type="GO" id="GO:0004588">
    <property type="term" value="F:orotate phosphoribosyltransferase activity"/>
    <property type="evidence" value="ECO:0007669"/>
    <property type="project" value="UniProtKB-UniRule"/>
</dbReference>
<dbReference type="GO" id="GO:0006207">
    <property type="term" value="P:'de novo' pyrimidine nucleobase biosynthetic process"/>
    <property type="evidence" value="ECO:0007669"/>
    <property type="project" value="TreeGrafter"/>
</dbReference>
<dbReference type="GO" id="GO:0044205">
    <property type="term" value="P:'de novo' UMP biosynthetic process"/>
    <property type="evidence" value="ECO:0007669"/>
    <property type="project" value="UniProtKB-UniRule"/>
</dbReference>
<dbReference type="GO" id="GO:0046132">
    <property type="term" value="P:pyrimidine ribonucleoside biosynthetic process"/>
    <property type="evidence" value="ECO:0007669"/>
    <property type="project" value="TreeGrafter"/>
</dbReference>
<dbReference type="CDD" id="cd06223">
    <property type="entry name" value="PRTases_typeI"/>
    <property type="match status" value="1"/>
</dbReference>
<dbReference type="FunFam" id="3.40.50.2020:FF:000008">
    <property type="entry name" value="Orotate phosphoribosyltransferase"/>
    <property type="match status" value="1"/>
</dbReference>
<dbReference type="Gene3D" id="3.40.50.2020">
    <property type="match status" value="1"/>
</dbReference>
<dbReference type="HAMAP" id="MF_01208">
    <property type="entry name" value="PyrE"/>
    <property type="match status" value="1"/>
</dbReference>
<dbReference type="InterPro" id="IPR023031">
    <property type="entry name" value="OPRT"/>
</dbReference>
<dbReference type="InterPro" id="IPR004467">
    <property type="entry name" value="Or_phspho_trans_dom"/>
</dbReference>
<dbReference type="InterPro" id="IPR000836">
    <property type="entry name" value="PRibTrfase_dom"/>
</dbReference>
<dbReference type="InterPro" id="IPR029057">
    <property type="entry name" value="PRTase-like"/>
</dbReference>
<dbReference type="NCBIfam" id="TIGR00336">
    <property type="entry name" value="pyrE"/>
    <property type="match status" value="1"/>
</dbReference>
<dbReference type="PANTHER" id="PTHR46683">
    <property type="entry name" value="OROTATE PHOSPHORIBOSYLTRANSFERASE 1-RELATED"/>
    <property type="match status" value="1"/>
</dbReference>
<dbReference type="PANTHER" id="PTHR46683:SF1">
    <property type="entry name" value="OROTATE PHOSPHORIBOSYLTRANSFERASE 1-RELATED"/>
    <property type="match status" value="1"/>
</dbReference>
<dbReference type="Pfam" id="PF00156">
    <property type="entry name" value="Pribosyltran"/>
    <property type="match status" value="1"/>
</dbReference>
<dbReference type="SUPFAM" id="SSF53271">
    <property type="entry name" value="PRTase-like"/>
    <property type="match status" value="1"/>
</dbReference>
<dbReference type="PROSITE" id="PS00103">
    <property type="entry name" value="PUR_PYR_PR_TRANSFER"/>
    <property type="match status" value="1"/>
</dbReference>
<accession>A9M1F6</accession>
<gene>
    <name evidence="1" type="primary">pyrE</name>
    <name type="ordered locus">NMCC_0347</name>
</gene>
<sequence>MTDFRQDFLKFSLAQNVLKFGEFTTKAGRRSPYFFNAGLFNDGASTLQLAKFYAQSIIESGIRFDMLFGPAYKGIILAAATAMMLAEKGVNVPFAYNRKEAKDHGEGGVLVGAPLKGRVLIIDDVISAGTSVRESIKLIEAEGATPAGVAIALDRMEKGTGELSAVQEVEKQYGLPVAPIASLNDLFILLQNNPEFGQFLEPVRAYRRQYGVE</sequence>